<accession>Q71ZT6</accession>
<keyword id="KW-0560">Oxidoreductase</keyword>
<keyword id="KW-0819">tRNA processing</keyword>
<dbReference type="EC" id="1.14.-.-" evidence="1"/>
<dbReference type="EMBL" id="AE017262">
    <property type="protein sequence ID" value="AAT04178.1"/>
    <property type="molecule type" value="Genomic_DNA"/>
</dbReference>
<dbReference type="RefSeq" id="WP_003725947.1">
    <property type="nucleotide sequence ID" value="NC_002973.6"/>
</dbReference>
<dbReference type="SMR" id="Q71ZT6"/>
<dbReference type="KEGG" id="lmf:LMOf2365_1403"/>
<dbReference type="HOGENOM" id="CLU_038878_1_0_9"/>
<dbReference type="GO" id="GO:0016705">
    <property type="term" value="F:oxidoreductase activity, acting on paired donors, with incorporation or reduction of molecular oxygen"/>
    <property type="evidence" value="ECO:0007669"/>
    <property type="project" value="UniProtKB-UniRule"/>
</dbReference>
<dbReference type="GO" id="GO:0006400">
    <property type="term" value="P:tRNA modification"/>
    <property type="evidence" value="ECO:0007669"/>
    <property type="project" value="UniProtKB-UniRule"/>
</dbReference>
<dbReference type="CDD" id="cd01518">
    <property type="entry name" value="RHOD_YceA"/>
    <property type="match status" value="1"/>
</dbReference>
<dbReference type="Gene3D" id="3.30.70.100">
    <property type="match status" value="1"/>
</dbReference>
<dbReference type="Gene3D" id="3.40.250.10">
    <property type="entry name" value="Rhodanese-like domain"/>
    <property type="match status" value="1"/>
</dbReference>
<dbReference type="HAMAP" id="MF_00469">
    <property type="entry name" value="TrhO"/>
    <property type="match status" value="1"/>
</dbReference>
<dbReference type="InterPro" id="IPR001763">
    <property type="entry name" value="Rhodanese-like_dom"/>
</dbReference>
<dbReference type="InterPro" id="IPR036873">
    <property type="entry name" value="Rhodanese-like_dom_sf"/>
</dbReference>
<dbReference type="InterPro" id="IPR022111">
    <property type="entry name" value="Rhodanese_C"/>
</dbReference>
<dbReference type="InterPro" id="IPR020936">
    <property type="entry name" value="TrhO"/>
</dbReference>
<dbReference type="InterPro" id="IPR040503">
    <property type="entry name" value="TRHO_N"/>
</dbReference>
<dbReference type="NCBIfam" id="NF001135">
    <property type="entry name" value="PRK00142.1-3"/>
    <property type="match status" value="1"/>
</dbReference>
<dbReference type="PANTHER" id="PTHR43268:SF3">
    <property type="entry name" value="RHODANESE-LIKE DOMAIN-CONTAINING PROTEIN 7-RELATED"/>
    <property type="match status" value="1"/>
</dbReference>
<dbReference type="PANTHER" id="PTHR43268">
    <property type="entry name" value="THIOSULFATE SULFURTRANSFERASE/RHODANESE-LIKE DOMAIN-CONTAINING PROTEIN 2"/>
    <property type="match status" value="1"/>
</dbReference>
<dbReference type="Pfam" id="PF00581">
    <property type="entry name" value="Rhodanese"/>
    <property type="match status" value="1"/>
</dbReference>
<dbReference type="Pfam" id="PF12368">
    <property type="entry name" value="Rhodanese_C"/>
    <property type="match status" value="1"/>
</dbReference>
<dbReference type="Pfam" id="PF17773">
    <property type="entry name" value="UPF0176_N"/>
    <property type="match status" value="1"/>
</dbReference>
<dbReference type="SMART" id="SM00450">
    <property type="entry name" value="RHOD"/>
    <property type="match status" value="1"/>
</dbReference>
<dbReference type="SUPFAM" id="SSF52821">
    <property type="entry name" value="Rhodanese/Cell cycle control phosphatase"/>
    <property type="match status" value="1"/>
</dbReference>
<dbReference type="PROSITE" id="PS50206">
    <property type="entry name" value="RHODANESE_3"/>
    <property type="match status" value="1"/>
</dbReference>
<comment type="function">
    <text evidence="1">Catalyzes oxygen-dependent 5-hydroxyuridine (ho5U) modification at position 34 in tRNAs.</text>
</comment>
<comment type="catalytic activity">
    <reaction evidence="1">
        <text>uridine(34) in tRNA + AH2 + O2 = 5-hydroxyuridine(34) in tRNA + A + H2O</text>
        <dbReference type="Rhea" id="RHEA:64224"/>
        <dbReference type="Rhea" id="RHEA-COMP:11727"/>
        <dbReference type="Rhea" id="RHEA-COMP:13381"/>
        <dbReference type="ChEBI" id="CHEBI:13193"/>
        <dbReference type="ChEBI" id="CHEBI:15377"/>
        <dbReference type="ChEBI" id="CHEBI:15379"/>
        <dbReference type="ChEBI" id="CHEBI:17499"/>
        <dbReference type="ChEBI" id="CHEBI:65315"/>
        <dbReference type="ChEBI" id="CHEBI:136877"/>
    </reaction>
</comment>
<comment type="similarity">
    <text evidence="1">Belongs to the TrhO family.</text>
</comment>
<gene>
    <name evidence="1" type="primary">trhO</name>
    <name type="ordered locus">LMOf2365_1403</name>
</gene>
<proteinExistence type="inferred from homology"/>
<reference key="1">
    <citation type="journal article" date="2004" name="Nucleic Acids Res.">
        <title>Whole genome comparisons of serotype 4b and 1/2a strains of the food-borne pathogen Listeria monocytogenes reveal new insights into the core genome components of this species.</title>
        <authorList>
            <person name="Nelson K.E."/>
            <person name="Fouts D.E."/>
            <person name="Mongodin E.F."/>
            <person name="Ravel J."/>
            <person name="DeBoy R.T."/>
            <person name="Kolonay J.F."/>
            <person name="Rasko D.A."/>
            <person name="Angiuoli S.V."/>
            <person name="Gill S.R."/>
            <person name="Paulsen I.T."/>
            <person name="Peterson J.D."/>
            <person name="White O."/>
            <person name="Nelson W.C."/>
            <person name="Nierman W.C."/>
            <person name="Beanan M.J."/>
            <person name="Brinkac L.M."/>
            <person name="Daugherty S.C."/>
            <person name="Dodson R.J."/>
            <person name="Durkin A.S."/>
            <person name="Madupu R."/>
            <person name="Haft D.H."/>
            <person name="Selengut J."/>
            <person name="Van Aken S.E."/>
            <person name="Khouri H.M."/>
            <person name="Fedorova N."/>
            <person name="Forberger H.A."/>
            <person name="Tran B."/>
            <person name="Kathariou S."/>
            <person name="Wonderling L.D."/>
            <person name="Uhlich G.A."/>
            <person name="Bayles D.O."/>
            <person name="Luchansky J.B."/>
            <person name="Fraser C.M."/>
        </authorList>
    </citation>
    <scope>NUCLEOTIDE SEQUENCE [LARGE SCALE GENOMIC DNA]</scope>
    <source>
        <strain>F2365</strain>
    </source>
</reference>
<feature type="chain" id="PRO_0000161487" description="tRNA uridine(34) hydroxylase">
    <location>
        <begin position="1"/>
        <end position="319"/>
    </location>
</feature>
<feature type="domain" description="Rhodanese" evidence="1">
    <location>
        <begin position="124"/>
        <end position="218"/>
    </location>
</feature>
<feature type="active site" description="Cysteine persulfide intermediate" evidence="1">
    <location>
        <position position="178"/>
    </location>
</feature>
<evidence type="ECO:0000255" key="1">
    <source>
        <dbReference type="HAMAP-Rule" id="MF_00469"/>
    </source>
</evidence>
<protein>
    <recommendedName>
        <fullName evidence="1">tRNA uridine(34) hydroxylase</fullName>
        <ecNumber evidence="1">1.14.-.-</ecNumber>
    </recommendedName>
    <alternativeName>
        <fullName evidence="1">tRNA hydroxylation protein O</fullName>
    </alternativeName>
</protein>
<organism>
    <name type="scientific">Listeria monocytogenes serotype 4b (strain F2365)</name>
    <dbReference type="NCBI Taxonomy" id="265669"/>
    <lineage>
        <taxon>Bacteria</taxon>
        <taxon>Bacillati</taxon>
        <taxon>Bacillota</taxon>
        <taxon>Bacilli</taxon>
        <taxon>Bacillales</taxon>
        <taxon>Listeriaceae</taxon>
        <taxon>Listeria</taxon>
    </lineage>
</organism>
<sequence>MSDYQVLLYYKYTTIDDPETFAKEHLAACKEMELKGRILVATEGINGTVSGTVEATNKYMDYMANDARFADMVFKIDAADAHAFKKMHVRPRAEIVSLSLEEDVNPLEVTGTYLEPSEFREALLDEDTVILDARNDYEFDIGHFRGAVRPDIQNFRELPGWIEDNREQLADKKIVTYCTGGIRCEKFSGWLKTAGFDDVSQLHGGIATYGKNEETKGELWDGQMYVFDERIAVPINQVNPTIVGKDYFDGTPCERYINCANPYCNKQILASIENEKKYLRSCSHDCRVHPANLYTKNLSKEEFTERLQAIDETLPEMVQ</sequence>
<name>TRHO_LISMF</name>